<reference key="1">
    <citation type="journal article" date="2005" name="Nature">
        <title>The DNA sequence of the human X chromosome.</title>
        <authorList>
            <person name="Ross M.T."/>
            <person name="Grafham D.V."/>
            <person name="Coffey A.J."/>
            <person name="Scherer S."/>
            <person name="McLay K."/>
            <person name="Muzny D."/>
            <person name="Platzer M."/>
            <person name="Howell G.R."/>
            <person name="Burrows C."/>
            <person name="Bird C.P."/>
            <person name="Frankish A."/>
            <person name="Lovell F.L."/>
            <person name="Howe K.L."/>
            <person name="Ashurst J.L."/>
            <person name="Fulton R.S."/>
            <person name="Sudbrak R."/>
            <person name="Wen G."/>
            <person name="Jones M.C."/>
            <person name="Hurles M.E."/>
            <person name="Andrews T.D."/>
            <person name="Scott C.E."/>
            <person name="Searle S."/>
            <person name="Ramser J."/>
            <person name="Whittaker A."/>
            <person name="Deadman R."/>
            <person name="Carter N.P."/>
            <person name="Hunt S.E."/>
            <person name="Chen R."/>
            <person name="Cree A."/>
            <person name="Gunaratne P."/>
            <person name="Havlak P."/>
            <person name="Hodgson A."/>
            <person name="Metzker M.L."/>
            <person name="Richards S."/>
            <person name="Scott G."/>
            <person name="Steffen D."/>
            <person name="Sodergren E."/>
            <person name="Wheeler D.A."/>
            <person name="Worley K.C."/>
            <person name="Ainscough R."/>
            <person name="Ambrose K.D."/>
            <person name="Ansari-Lari M.A."/>
            <person name="Aradhya S."/>
            <person name="Ashwell R.I."/>
            <person name="Babbage A.K."/>
            <person name="Bagguley C.L."/>
            <person name="Ballabio A."/>
            <person name="Banerjee R."/>
            <person name="Barker G.E."/>
            <person name="Barlow K.F."/>
            <person name="Barrett I.P."/>
            <person name="Bates K.N."/>
            <person name="Beare D.M."/>
            <person name="Beasley H."/>
            <person name="Beasley O."/>
            <person name="Beck A."/>
            <person name="Bethel G."/>
            <person name="Blechschmidt K."/>
            <person name="Brady N."/>
            <person name="Bray-Allen S."/>
            <person name="Bridgeman A.M."/>
            <person name="Brown A.J."/>
            <person name="Brown M.J."/>
            <person name="Bonnin D."/>
            <person name="Bruford E.A."/>
            <person name="Buhay C."/>
            <person name="Burch P."/>
            <person name="Burford D."/>
            <person name="Burgess J."/>
            <person name="Burrill W."/>
            <person name="Burton J."/>
            <person name="Bye J.M."/>
            <person name="Carder C."/>
            <person name="Carrel L."/>
            <person name="Chako J."/>
            <person name="Chapman J.C."/>
            <person name="Chavez D."/>
            <person name="Chen E."/>
            <person name="Chen G."/>
            <person name="Chen Y."/>
            <person name="Chen Z."/>
            <person name="Chinault C."/>
            <person name="Ciccodicola A."/>
            <person name="Clark S.Y."/>
            <person name="Clarke G."/>
            <person name="Clee C.M."/>
            <person name="Clegg S."/>
            <person name="Clerc-Blankenburg K."/>
            <person name="Clifford K."/>
            <person name="Cobley V."/>
            <person name="Cole C.G."/>
            <person name="Conquer J.S."/>
            <person name="Corby N."/>
            <person name="Connor R.E."/>
            <person name="David R."/>
            <person name="Davies J."/>
            <person name="Davis C."/>
            <person name="Davis J."/>
            <person name="Delgado O."/>
            <person name="Deshazo D."/>
            <person name="Dhami P."/>
            <person name="Ding Y."/>
            <person name="Dinh H."/>
            <person name="Dodsworth S."/>
            <person name="Draper H."/>
            <person name="Dugan-Rocha S."/>
            <person name="Dunham A."/>
            <person name="Dunn M."/>
            <person name="Durbin K.J."/>
            <person name="Dutta I."/>
            <person name="Eades T."/>
            <person name="Ellwood M."/>
            <person name="Emery-Cohen A."/>
            <person name="Errington H."/>
            <person name="Evans K.L."/>
            <person name="Faulkner L."/>
            <person name="Francis F."/>
            <person name="Frankland J."/>
            <person name="Fraser A.E."/>
            <person name="Galgoczy P."/>
            <person name="Gilbert J."/>
            <person name="Gill R."/>
            <person name="Gloeckner G."/>
            <person name="Gregory S.G."/>
            <person name="Gribble S."/>
            <person name="Griffiths C."/>
            <person name="Grocock R."/>
            <person name="Gu Y."/>
            <person name="Gwilliam R."/>
            <person name="Hamilton C."/>
            <person name="Hart E.A."/>
            <person name="Hawes A."/>
            <person name="Heath P.D."/>
            <person name="Heitmann K."/>
            <person name="Hennig S."/>
            <person name="Hernandez J."/>
            <person name="Hinzmann B."/>
            <person name="Ho S."/>
            <person name="Hoffs M."/>
            <person name="Howden P.J."/>
            <person name="Huckle E.J."/>
            <person name="Hume J."/>
            <person name="Hunt P.J."/>
            <person name="Hunt A.R."/>
            <person name="Isherwood J."/>
            <person name="Jacob L."/>
            <person name="Johnson D."/>
            <person name="Jones S."/>
            <person name="de Jong P.J."/>
            <person name="Joseph S.S."/>
            <person name="Keenan S."/>
            <person name="Kelly S."/>
            <person name="Kershaw J.K."/>
            <person name="Khan Z."/>
            <person name="Kioschis P."/>
            <person name="Klages S."/>
            <person name="Knights A.J."/>
            <person name="Kosiura A."/>
            <person name="Kovar-Smith C."/>
            <person name="Laird G.K."/>
            <person name="Langford C."/>
            <person name="Lawlor S."/>
            <person name="Leversha M."/>
            <person name="Lewis L."/>
            <person name="Liu W."/>
            <person name="Lloyd C."/>
            <person name="Lloyd D.M."/>
            <person name="Loulseged H."/>
            <person name="Loveland J.E."/>
            <person name="Lovell J.D."/>
            <person name="Lozado R."/>
            <person name="Lu J."/>
            <person name="Lyne R."/>
            <person name="Ma J."/>
            <person name="Maheshwari M."/>
            <person name="Matthews L.H."/>
            <person name="McDowall J."/>
            <person name="McLaren S."/>
            <person name="McMurray A."/>
            <person name="Meidl P."/>
            <person name="Meitinger T."/>
            <person name="Milne S."/>
            <person name="Miner G."/>
            <person name="Mistry S.L."/>
            <person name="Morgan M."/>
            <person name="Morris S."/>
            <person name="Mueller I."/>
            <person name="Mullikin J.C."/>
            <person name="Nguyen N."/>
            <person name="Nordsiek G."/>
            <person name="Nyakatura G."/>
            <person name="O'dell C.N."/>
            <person name="Okwuonu G."/>
            <person name="Palmer S."/>
            <person name="Pandian R."/>
            <person name="Parker D."/>
            <person name="Parrish J."/>
            <person name="Pasternak S."/>
            <person name="Patel D."/>
            <person name="Pearce A.V."/>
            <person name="Pearson D.M."/>
            <person name="Pelan S.E."/>
            <person name="Perez L."/>
            <person name="Porter K.M."/>
            <person name="Ramsey Y."/>
            <person name="Reichwald K."/>
            <person name="Rhodes S."/>
            <person name="Ridler K.A."/>
            <person name="Schlessinger D."/>
            <person name="Schueler M.G."/>
            <person name="Sehra H.K."/>
            <person name="Shaw-Smith C."/>
            <person name="Shen H."/>
            <person name="Sheridan E.M."/>
            <person name="Shownkeen R."/>
            <person name="Skuce C.D."/>
            <person name="Smith M.L."/>
            <person name="Sotheran E.C."/>
            <person name="Steingruber H.E."/>
            <person name="Steward C.A."/>
            <person name="Storey R."/>
            <person name="Swann R.M."/>
            <person name="Swarbreck D."/>
            <person name="Tabor P.E."/>
            <person name="Taudien S."/>
            <person name="Taylor T."/>
            <person name="Teague B."/>
            <person name="Thomas K."/>
            <person name="Thorpe A."/>
            <person name="Timms K."/>
            <person name="Tracey A."/>
            <person name="Trevanion S."/>
            <person name="Tromans A.C."/>
            <person name="d'Urso M."/>
            <person name="Verduzco D."/>
            <person name="Villasana D."/>
            <person name="Waldron L."/>
            <person name="Wall M."/>
            <person name="Wang Q."/>
            <person name="Warren J."/>
            <person name="Warry G.L."/>
            <person name="Wei X."/>
            <person name="West A."/>
            <person name="Whitehead S.L."/>
            <person name="Whiteley M.N."/>
            <person name="Wilkinson J.E."/>
            <person name="Willey D.L."/>
            <person name="Williams G."/>
            <person name="Williams L."/>
            <person name="Williamson A."/>
            <person name="Williamson H."/>
            <person name="Wilming L."/>
            <person name="Woodmansey R.L."/>
            <person name="Wray P.W."/>
            <person name="Yen J."/>
            <person name="Zhang J."/>
            <person name="Zhou J."/>
            <person name="Zoghbi H."/>
            <person name="Zorilla S."/>
            <person name="Buck D."/>
            <person name="Reinhardt R."/>
            <person name="Poustka A."/>
            <person name="Rosenthal A."/>
            <person name="Lehrach H."/>
            <person name="Meindl A."/>
            <person name="Minx P.J."/>
            <person name="Hillier L.W."/>
            <person name="Willard H.F."/>
            <person name="Wilson R.K."/>
            <person name="Waterston R.H."/>
            <person name="Rice C.M."/>
            <person name="Vaudin M."/>
            <person name="Coulson A."/>
            <person name="Nelson D.L."/>
            <person name="Weinstock G."/>
            <person name="Sulston J.E."/>
            <person name="Durbin R.M."/>
            <person name="Hubbard T."/>
            <person name="Gibbs R.A."/>
            <person name="Beck S."/>
            <person name="Rogers J."/>
            <person name="Bentley D.R."/>
        </authorList>
    </citation>
    <scope>NUCLEOTIDE SEQUENCE [LARGE SCALE GENOMIC DNA]</scope>
</reference>
<reference key="2">
    <citation type="submission" date="2005-09" db="EMBL/GenBank/DDBJ databases">
        <authorList>
            <person name="Mural R.J."/>
            <person name="Istrail S."/>
            <person name="Sutton G.G."/>
            <person name="Florea L."/>
            <person name="Halpern A.L."/>
            <person name="Mobarry C.M."/>
            <person name="Lippert R."/>
            <person name="Walenz B."/>
            <person name="Shatkay H."/>
            <person name="Dew I."/>
            <person name="Miller J.R."/>
            <person name="Flanigan M.J."/>
            <person name="Edwards N.J."/>
            <person name="Bolanos R."/>
            <person name="Fasulo D."/>
            <person name="Halldorsson B.V."/>
            <person name="Hannenhalli S."/>
            <person name="Turner R."/>
            <person name="Yooseph S."/>
            <person name="Lu F."/>
            <person name="Nusskern D.R."/>
            <person name="Shue B.C."/>
            <person name="Zheng X.H."/>
            <person name="Zhong F."/>
            <person name="Delcher A.L."/>
            <person name="Huson D.H."/>
            <person name="Kravitz S.A."/>
            <person name="Mouchard L."/>
            <person name="Reinert K."/>
            <person name="Remington K.A."/>
            <person name="Clark A.G."/>
            <person name="Waterman M.S."/>
            <person name="Eichler E.E."/>
            <person name="Adams M.D."/>
            <person name="Hunkapiller M.W."/>
            <person name="Myers E.W."/>
            <person name="Venter J.C."/>
        </authorList>
    </citation>
    <scope>NUCLEOTIDE SEQUENCE [LARGE SCALE GENOMIC DNA]</scope>
</reference>
<reference key="3">
    <citation type="journal article" date="2004" name="Genome Res.">
        <title>The status, quality, and expansion of the NIH full-length cDNA project: the Mammalian Gene Collection (MGC).</title>
        <authorList>
            <consortium name="The MGC Project Team"/>
        </authorList>
    </citation>
    <scope>NUCLEOTIDE SEQUENCE [LARGE SCALE MRNA]</scope>
    <source>
        <tissue>Brain</tissue>
    </source>
</reference>
<gene>
    <name type="primary">SLC25A53</name>
    <name type="synonym">MCART6</name>
</gene>
<proteinExistence type="evidence at protein level"/>
<keyword id="KW-0472">Membrane</keyword>
<keyword id="KW-0496">Mitochondrion</keyword>
<keyword id="KW-0999">Mitochondrion inner membrane</keyword>
<keyword id="KW-1267">Proteomics identification</keyword>
<keyword id="KW-1185">Reference proteome</keyword>
<keyword id="KW-0677">Repeat</keyword>
<keyword id="KW-0812">Transmembrane</keyword>
<keyword id="KW-1133">Transmembrane helix</keyword>
<keyword id="KW-0813">Transport</keyword>
<dbReference type="EMBL" id="Z82254">
    <property type="protein sequence ID" value="CAI41997.1"/>
    <property type="molecule type" value="Genomic_DNA"/>
</dbReference>
<dbReference type="EMBL" id="CH471120">
    <property type="protein sequence ID" value="EAX02763.1"/>
    <property type="molecule type" value="Genomic_DNA"/>
</dbReference>
<dbReference type="EMBL" id="BC140812">
    <property type="protein sequence ID" value="AAI40813.1"/>
    <property type="molecule type" value="mRNA"/>
</dbReference>
<dbReference type="EMBL" id="BC140814">
    <property type="protein sequence ID" value="AAI40815.1"/>
    <property type="molecule type" value="mRNA"/>
</dbReference>
<dbReference type="CCDS" id="CCDS35363.1"/>
<dbReference type="RefSeq" id="NP_001012773.2">
    <property type="nucleotide sequence ID" value="NM_001012755.5"/>
</dbReference>
<dbReference type="RefSeq" id="XP_005262186.1">
    <property type="nucleotide sequence ID" value="XM_005262129.6"/>
</dbReference>
<dbReference type="RefSeq" id="XP_011529254.1">
    <property type="nucleotide sequence ID" value="XM_011530952.4"/>
</dbReference>
<dbReference type="RefSeq" id="XP_011529255.1">
    <property type="nucleotide sequence ID" value="XM_011530953.4"/>
</dbReference>
<dbReference type="RefSeq" id="XP_016885005.1">
    <property type="nucleotide sequence ID" value="XM_017029516.1"/>
</dbReference>
<dbReference type="RefSeq" id="XP_054183025.1">
    <property type="nucleotide sequence ID" value="XM_054327050.1"/>
</dbReference>
<dbReference type="RefSeq" id="XP_054183026.1">
    <property type="nucleotide sequence ID" value="XM_054327051.1"/>
</dbReference>
<dbReference type="RefSeq" id="XP_054183027.1">
    <property type="nucleotide sequence ID" value="XM_054327052.1"/>
</dbReference>
<dbReference type="SMR" id="Q5H9E4"/>
<dbReference type="BioGRID" id="135171">
    <property type="interactions" value="2"/>
</dbReference>
<dbReference type="FunCoup" id="Q5H9E4">
    <property type="interactions" value="565"/>
</dbReference>
<dbReference type="IntAct" id="Q5H9E4">
    <property type="interactions" value="1"/>
</dbReference>
<dbReference type="STRING" id="9606.ENSP00000468980"/>
<dbReference type="GlyGen" id="Q5H9E4">
    <property type="glycosylation" value="1 site, 1 O-linked glycan (1 site)"/>
</dbReference>
<dbReference type="iPTMnet" id="Q5H9E4"/>
<dbReference type="BioMuta" id="SLC25A53"/>
<dbReference type="DMDM" id="74755435"/>
<dbReference type="MassIVE" id="Q5H9E4"/>
<dbReference type="PaxDb" id="9606-ENSP00000468980"/>
<dbReference type="PeptideAtlas" id="Q5H9E4"/>
<dbReference type="ProteomicsDB" id="62885"/>
<dbReference type="Antibodypedia" id="73245">
    <property type="antibodies" value="76 antibodies from 16 providers"/>
</dbReference>
<dbReference type="DNASU" id="401612"/>
<dbReference type="Ensembl" id="ENST00000594199.3">
    <property type="protein sequence ID" value="ENSP00000468980.1"/>
    <property type="gene ID" value="ENSG00000269743.3"/>
</dbReference>
<dbReference type="GeneID" id="401612"/>
<dbReference type="KEGG" id="hsa:401612"/>
<dbReference type="MANE-Select" id="ENST00000594199.3">
    <property type="protein sequence ID" value="ENSP00000468980.1"/>
    <property type="RefSeq nucleotide sequence ID" value="NM_001012755.5"/>
    <property type="RefSeq protein sequence ID" value="NP_001012773.2"/>
</dbReference>
<dbReference type="UCSC" id="uc022cbz.2">
    <property type="organism name" value="human"/>
</dbReference>
<dbReference type="AGR" id="HGNC:31894"/>
<dbReference type="CTD" id="401612"/>
<dbReference type="GeneCards" id="SLC25A53"/>
<dbReference type="HGNC" id="HGNC:31894">
    <property type="gene designation" value="SLC25A53"/>
</dbReference>
<dbReference type="HPA" id="ENSG00000269743">
    <property type="expression patterns" value="Tissue enhanced (brain, lymphoid tissue)"/>
</dbReference>
<dbReference type="MIM" id="300941">
    <property type="type" value="gene"/>
</dbReference>
<dbReference type="neXtProt" id="NX_Q5H9E4"/>
<dbReference type="OpenTargets" id="ENSG00000269743"/>
<dbReference type="PharmGKB" id="PA142671476"/>
<dbReference type="VEuPathDB" id="HostDB:ENSG00000269743"/>
<dbReference type="eggNOG" id="KOG1519">
    <property type="taxonomic scope" value="Eukaryota"/>
</dbReference>
<dbReference type="GeneTree" id="ENSGT00940000161713"/>
<dbReference type="HOGENOM" id="CLU_061821_1_0_1"/>
<dbReference type="InParanoid" id="Q5H9E4"/>
<dbReference type="OMA" id="LGYYRAF"/>
<dbReference type="OrthoDB" id="2139348at2759"/>
<dbReference type="PAN-GO" id="Q5H9E4">
    <property type="GO annotations" value="3 GO annotations based on evolutionary models"/>
</dbReference>
<dbReference type="PhylomeDB" id="Q5H9E4"/>
<dbReference type="TreeFam" id="TF314192"/>
<dbReference type="PathwayCommons" id="Q5H9E4"/>
<dbReference type="SignaLink" id="Q5H9E4"/>
<dbReference type="BioGRID-ORCS" id="401612">
    <property type="hits" value="14 hits in 735 CRISPR screens"/>
</dbReference>
<dbReference type="ChiTaRS" id="SLC25A53">
    <property type="organism name" value="human"/>
</dbReference>
<dbReference type="GenomeRNAi" id="401612"/>
<dbReference type="Pharos" id="Q5H9E4">
    <property type="development level" value="Tdark"/>
</dbReference>
<dbReference type="PRO" id="PR:Q5H9E4"/>
<dbReference type="Proteomes" id="UP000005640">
    <property type="component" value="Chromosome X"/>
</dbReference>
<dbReference type="RNAct" id="Q5H9E4">
    <property type="molecule type" value="protein"/>
</dbReference>
<dbReference type="Bgee" id="ENSG00000269743">
    <property type="expression patterns" value="Expressed in calcaneal tendon and 98 other cell types or tissues"/>
</dbReference>
<dbReference type="GO" id="GO:0005743">
    <property type="term" value="C:mitochondrial inner membrane"/>
    <property type="evidence" value="ECO:0007669"/>
    <property type="project" value="UniProtKB-SubCell"/>
</dbReference>
<dbReference type="GO" id="GO:0005739">
    <property type="term" value="C:mitochondrion"/>
    <property type="evidence" value="ECO:0006056"/>
    <property type="project" value="FlyBase"/>
</dbReference>
<dbReference type="GO" id="GO:0051724">
    <property type="term" value="F:NAD transmembrane transporter activity"/>
    <property type="evidence" value="ECO:0000318"/>
    <property type="project" value="GO_Central"/>
</dbReference>
<dbReference type="Gene3D" id="1.50.40.10">
    <property type="entry name" value="Mitochondrial carrier domain"/>
    <property type="match status" value="1"/>
</dbReference>
<dbReference type="InterPro" id="IPR052465">
    <property type="entry name" value="Mito_NAD+_Carrier"/>
</dbReference>
<dbReference type="InterPro" id="IPR018108">
    <property type="entry name" value="Mitochondrial_sb/sol_carrier"/>
</dbReference>
<dbReference type="InterPro" id="IPR023395">
    <property type="entry name" value="Mt_carrier_dom_sf"/>
</dbReference>
<dbReference type="PANTHER" id="PTHR46131">
    <property type="entry name" value="SD08549P"/>
    <property type="match status" value="1"/>
</dbReference>
<dbReference type="PANTHER" id="PTHR46131:SF5">
    <property type="entry name" value="SOLUTE CARRIER FAMILY 25 MEMBER 53"/>
    <property type="match status" value="1"/>
</dbReference>
<dbReference type="Pfam" id="PF00153">
    <property type="entry name" value="Mito_carr"/>
    <property type="match status" value="2"/>
</dbReference>
<dbReference type="SUPFAM" id="SSF103506">
    <property type="entry name" value="Mitochondrial carrier"/>
    <property type="match status" value="1"/>
</dbReference>
<dbReference type="PROSITE" id="PS50920">
    <property type="entry name" value="SOLCAR"/>
    <property type="match status" value="2"/>
</dbReference>
<comment type="subcellular location">
    <subcellularLocation>
        <location evidence="3">Mitochondrion inner membrane</location>
        <topology evidence="3">Multi-pass membrane protein</topology>
    </subcellularLocation>
</comment>
<comment type="similarity">
    <text evidence="3">Belongs to the mitochondrial carrier (TC 2.A.29) family.</text>
</comment>
<protein>
    <recommendedName>
        <fullName>Solute carrier family 25 member 53</fullName>
    </recommendedName>
    <alternativeName>
        <fullName>Mitochondrial carrier triple repeat protein 6</fullName>
    </alternativeName>
</protein>
<name>S2553_HUMAN</name>
<organism>
    <name type="scientific">Homo sapiens</name>
    <name type="common">Human</name>
    <dbReference type="NCBI Taxonomy" id="9606"/>
    <lineage>
        <taxon>Eukaryota</taxon>
        <taxon>Metazoa</taxon>
        <taxon>Chordata</taxon>
        <taxon>Craniata</taxon>
        <taxon>Vertebrata</taxon>
        <taxon>Euteleostomi</taxon>
        <taxon>Mammalia</taxon>
        <taxon>Eutheria</taxon>
        <taxon>Euarchontoglires</taxon>
        <taxon>Primates</taxon>
        <taxon>Haplorrhini</taxon>
        <taxon>Catarrhini</taxon>
        <taxon>Hominidae</taxon>
        <taxon>Homo</taxon>
    </lineage>
</organism>
<accession>Q5H9E4</accession>
<accession>B2RTT9</accession>
<feature type="chain" id="PRO_0000271791" description="Solute carrier family 25 member 53">
    <location>
        <begin position="1"/>
        <end position="307"/>
    </location>
</feature>
<feature type="transmembrane region" description="Helical; Name=1" evidence="1">
    <location>
        <begin position="31"/>
        <end position="51"/>
    </location>
</feature>
<feature type="transmembrane region" description="Helical; Name=2" evidence="1">
    <location>
        <begin position="82"/>
        <end position="102"/>
    </location>
</feature>
<feature type="transmembrane region" description="Helical; Name=3" evidence="1">
    <location>
        <begin position="112"/>
        <end position="132"/>
    </location>
</feature>
<feature type="transmembrane region" description="Helical; Name=4" evidence="1">
    <location>
        <begin position="181"/>
        <end position="201"/>
    </location>
</feature>
<feature type="transmembrane region" description="Helical; Name=5" evidence="1">
    <location>
        <begin position="215"/>
        <end position="235"/>
    </location>
</feature>
<feature type="transmembrane region" description="Helical; Name=6" evidence="1">
    <location>
        <begin position="269"/>
        <end position="290"/>
    </location>
</feature>
<feature type="repeat" description="Solcar 1">
    <location>
        <begin position="25"/>
        <end position="105"/>
    </location>
</feature>
<feature type="repeat" description="Solcar 2">
    <location>
        <begin position="112"/>
        <end position="202"/>
    </location>
</feature>
<feature type="repeat" description="Solcar 3">
    <location>
        <begin position="210"/>
        <end position="302"/>
    </location>
</feature>
<feature type="region of interest" description="Disordered" evidence="2">
    <location>
        <begin position="1"/>
        <end position="23"/>
    </location>
</feature>
<feature type="compositionally biased region" description="Basic and acidic residues" evidence="2">
    <location>
        <begin position="8"/>
        <end position="22"/>
    </location>
</feature>
<sequence length="307" mass="34481">MGEQNHSPGKELQHRTRAEAPGKKSWHSQAYALGAVSNFMSTFLTFPIYKVVFRQQIHAMAVSEAVRQLWHEGPQYFYRGIYPPLLSKTLQGTLLFGTYDSLLCFLSPVGPHTLGHRWAAGLMSGVVEAVALSPFERVQNVLQDGRKQARFPSTFSILKEFNSYGLWGRLSLGYYRGFWPVLARNSLGSALYFSFKDPIQDGLAEQGLPHWVPALVSGSVNGTITCLVLYPLIVLVANMQSHIGWQNMPSLWASAQDVWNTRGRKLLLIYRGGSLVILRSSVTWGLTTAIHDFLQRKSHSRKELKTD</sequence>
<evidence type="ECO:0000255" key="1"/>
<evidence type="ECO:0000256" key="2">
    <source>
        <dbReference type="SAM" id="MobiDB-lite"/>
    </source>
</evidence>
<evidence type="ECO:0000305" key="3"/>